<reference key="1">
    <citation type="journal article" date="2007" name="Science">
        <title>The Calyptogena magnifica chemoautotrophic symbiont genome.</title>
        <authorList>
            <person name="Newton I.L.G."/>
            <person name="Woyke T."/>
            <person name="Auchtung T.A."/>
            <person name="Dilly G.F."/>
            <person name="Dutton R.J."/>
            <person name="Fisher M.C."/>
            <person name="Fontanez K.M."/>
            <person name="Lau E."/>
            <person name="Stewart F.J."/>
            <person name="Richardson P.M."/>
            <person name="Barry K.W."/>
            <person name="Saunders E."/>
            <person name="Detter J.C."/>
            <person name="Wu D."/>
            <person name="Eisen J.A."/>
            <person name="Cavanaugh C.M."/>
        </authorList>
    </citation>
    <scope>NUCLEOTIDE SEQUENCE [LARGE SCALE GENOMIC DNA]</scope>
</reference>
<evidence type="ECO:0000255" key="1">
    <source>
        <dbReference type="HAMAP-Rule" id="MF_00147"/>
    </source>
</evidence>
<accession>A1AXX3</accession>
<proteinExistence type="inferred from homology"/>
<comment type="function">
    <text evidence="1">Involved in the gluconeogenesis. Catalyzes stereospecifically the conversion of dihydroxyacetone phosphate (DHAP) to D-glyceraldehyde-3-phosphate (G3P).</text>
</comment>
<comment type="catalytic activity">
    <reaction evidence="1">
        <text>D-glyceraldehyde 3-phosphate = dihydroxyacetone phosphate</text>
        <dbReference type="Rhea" id="RHEA:18585"/>
        <dbReference type="ChEBI" id="CHEBI:57642"/>
        <dbReference type="ChEBI" id="CHEBI:59776"/>
        <dbReference type="EC" id="5.3.1.1"/>
    </reaction>
</comment>
<comment type="pathway">
    <text evidence="1">Carbohydrate biosynthesis; gluconeogenesis.</text>
</comment>
<comment type="pathway">
    <text evidence="1">Carbohydrate degradation; glycolysis; D-glyceraldehyde 3-phosphate from glycerone phosphate: step 1/1.</text>
</comment>
<comment type="subunit">
    <text evidence="1">Homodimer.</text>
</comment>
<comment type="subcellular location">
    <subcellularLocation>
        <location evidence="1">Cytoplasm</location>
    </subcellularLocation>
</comment>
<comment type="similarity">
    <text evidence="1">Belongs to the triosephosphate isomerase family.</text>
</comment>
<gene>
    <name evidence="1" type="primary">tpiA</name>
    <name type="ordered locus">Rmag_1076</name>
</gene>
<protein>
    <recommendedName>
        <fullName evidence="1">Triosephosphate isomerase</fullName>
        <shortName evidence="1">TIM</shortName>
        <shortName evidence="1">TPI</shortName>
        <ecNumber evidence="1">5.3.1.1</ecNumber>
    </recommendedName>
    <alternativeName>
        <fullName evidence="1">Triose-phosphate isomerase</fullName>
    </alternativeName>
</protein>
<organism>
    <name type="scientific">Ruthia magnifica subsp. Calyptogena magnifica</name>
    <dbReference type="NCBI Taxonomy" id="413404"/>
    <lineage>
        <taxon>Bacteria</taxon>
        <taxon>Pseudomonadati</taxon>
        <taxon>Pseudomonadota</taxon>
        <taxon>Gammaproteobacteria</taxon>
        <taxon>Candidatus Pseudothioglobaceae</taxon>
        <taxon>Candidatus Ruthturnera</taxon>
    </lineage>
</organism>
<sequence>MRQIIIAGNWKMNASKEATNTLVIGILSGMADVKSKVIVCVPSLYMSQVEVLVVDSQLNLGAQNLNVNKLGAFTGEISADMIKDFGAKYVIVGHSERRSLYGETDEIVAQKVQVALDNNLTPLFCIGELLEDRESNNTKSVVSKQIQVVIDRVGIEAFKNIIVAYEPVWAIGTNVTATPQQAQDTHAFIRSMLAEYDADIAQITSILYGGSMNSRNAAELLNCKDIDGGLIGGASLKAQDFLQICKAG</sequence>
<dbReference type="EC" id="5.3.1.1" evidence="1"/>
<dbReference type="EMBL" id="CP000488">
    <property type="protein sequence ID" value="ABL02780.1"/>
    <property type="molecule type" value="Genomic_DNA"/>
</dbReference>
<dbReference type="RefSeq" id="WP_011738405.1">
    <property type="nucleotide sequence ID" value="NC_008610.1"/>
</dbReference>
<dbReference type="SMR" id="A1AXX3"/>
<dbReference type="STRING" id="413404.Rmag_1076"/>
<dbReference type="KEGG" id="rma:Rmag_1076"/>
<dbReference type="eggNOG" id="COG0149">
    <property type="taxonomic scope" value="Bacteria"/>
</dbReference>
<dbReference type="HOGENOM" id="CLU_024251_2_1_6"/>
<dbReference type="OrthoDB" id="9809429at2"/>
<dbReference type="UniPathway" id="UPA00109">
    <property type="reaction ID" value="UER00189"/>
</dbReference>
<dbReference type="UniPathway" id="UPA00138"/>
<dbReference type="Proteomes" id="UP000002587">
    <property type="component" value="Chromosome"/>
</dbReference>
<dbReference type="GO" id="GO:0005829">
    <property type="term" value="C:cytosol"/>
    <property type="evidence" value="ECO:0007669"/>
    <property type="project" value="TreeGrafter"/>
</dbReference>
<dbReference type="GO" id="GO:0004807">
    <property type="term" value="F:triose-phosphate isomerase activity"/>
    <property type="evidence" value="ECO:0007669"/>
    <property type="project" value="UniProtKB-UniRule"/>
</dbReference>
<dbReference type="GO" id="GO:0006094">
    <property type="term" value="P:gluconeogenesis"/>
    <property type="evidence" value="ECO:0007669"/>
    <property type="project" value="UniProtKB-UniRule"/>
</dbReference>
<dbReference type="GO" id="GO:0046166">
    <property type="term" value="P:glyceraldehyde-3-phosphate biosynthetic process"/>
    <property type="evidence" value="ECO:0007669"/>
    <property type="project" value="TreeGrafter"/>
</dbReference>
<dbReference type="GO" id="GO:0019563">
    <property type="term" value="P:glycerol catabolic process"/>
    <property type="evidence" value="ECO:0007669"/>
    <property type="project" value="TreeGrafter"/>
</dbReference>
<dbReference type="GO" id="GO:0006096">
    <property type="term" value="P:glycolytic process"/>
    <property type="evidence" value="ECO:0007669"/>
    <property type="project" value="UniProtKB-UniRule"/>
</dbReference>
<dbReference type="CDD" id="cd00311">
    <property type="entry name" value="TIM"/>
    <property type="match status" value="1"/>
</dbReference>
<dbReference type="FunFam" id="3.20.20.70:FF:000020">
    <property type="entry name" value="Triosephosphate isomerase"/>
    <property type="match status" value="1"/>
</dbReference>
<dbReference type="Gene3D" id="3.20.20.70">
    <property type="entry name" value="Aldolase class I"/>
    <property type="match status" value="1"/>
</dbReference>
<dbReference type="HAMAP" id="MF_00147_B">
    <property type="entry name" value="TIM_B"/>
    <property type="match status" value="1"/>
</dbReference>
<dbReference type="InterPro" id="IPR013785">
    <property type="entry name" value="Aldolase_TIM"/>
</dbReference>
<dbReference type="InterPro" id="IPR035990">
    <property type="entry name" value="TIM_sf"/>
</dbReference>
<dbReference type="InterPro" id="IPR022896">
    <property type="entry name" value="TrioseP_Isoase_bac/euk"/>
</dbReference>
<dbReference type="InterPro" id="IPR000652">
    <property type="entry name" value="Triosephosphate_isomerase"/>
</dbReference>
<dbReference type="InterPro" id="IPR020861">
    <property type="entry name" value="Triosephosphate_isomerase_AS"/>
</dbReference>
<dbReference type="NCBIfam" id="TIGR00419">
    <property type="entry name" value="tim"/>
    <property type="match status" value="1"/>
</dbReference>
<dbReference type="PANTHER" id="PTHR21139">
    <property type="entry name" value="TRIOSEPHOSPHATE ISOMERASE"/>
    <property type="match status" value="1"/>
</dbReference>
<dbReference type="PANTHER" id="PTHR21139:SF42">
    <property type="entry name" value="TRIOSEPHOSPHATE ISOMERASE"/>
    <property type="match status" value="1"/>
</dbReference>
<dbReference type="Pfam" id="PF00121">
    <property type="entry name" value="TIM"/>
    <property type="match status" value="1"/>
</dbReference>
<dbReference type="SUPFAM" id="SSF51351">
    <property type="entry name" value="Triosephosphate isomerase (TIM)"/>
    <property type="match status" value="1"/>
</dbReference>
<dbReference type="PROSITE" id="PS00171">
    <property type="entry name" value="TIM_1"/>
    <property type="match status" value="1"/>
</dbReference>
<dbReference type="PROSITE" id="PS51440">
    <property type="entry name" value="TIM_2"/>
    <property type="match status" value="1"/>
</dbReference>
<feature type="chain" id="PRO_0000307548" description="Triosephosphate isomerase">
    <location>
        <begin position="1"/>
        <end position="248"/>
    </location>
</feature>
<feature type="active site" description="Electrophile" evidence="1">
    <location>
        <position position="94"/>
    </location>
</feature>
<feature type="active site" description="Proton acceptor" evidence="1">
    <location>
        <position position="166"/>
    </location>
</feature>
<feature type="binding site" evidence="1">
    <location>
        <begin position="9"/>
        <end position="11"/>
    </location>
    <ligand>
        <name>substrate</name>
    </ligand>
</feature>
<feature type="binding site" evidence="1">
    <location>
        <position position="172"/>
    </location>
    <ligand>
        <name>substrate</name>
    </ligand>
</feature>
<feature type="binding site" evidence="1">
    <location>
        <position position="211"/>
    </location>
    <ligand>
        <name>substrate</name>
    </ligand>
</feature>
<feature type="binding site" evidence="1">
    <location>
        <begin position="232"/>
        <end position="233"/>
    </location>
    <ligand>
        <name>substrate</name>
    </ligand>
</feature>
<name>TPIS_RUTMC</name>
<keyword id="KW-0963">Cytoplasm</keyword>
<keyword id="KW-0312">Gluconeogenesis</keyword>
<keyword id="KW-0324">Glycolysis</keyword>
<keyword id="KW-0413">Isomerase</keyword>